<organism>
    <name type="scientific">Homo sapiens</name>
    <name type="common">Human</name>
    <dbReference type="NCBI Taxonomy" id="9606"/>
    <lineage>
        <taxon>Eukaryota</taxon>
        <taxon>Metazoa</taxon>
        <taxon>Chordata</taxon>
        <taxon>Craniata</taxon>
        <taxon>Vertebrata</taxon>
        <taxon>Euteleostomi</taxon>
        <taxon>Mammalia</taxon>
        <taxon>Eutheria</taxon>
        <taxon>Euarchontoglires</taxon>
        <taxon>Primates</taxon>
        <taxon>Haplorrhini</taxon>
        <taxon>Catarrhini</taxon>
        <taxon>Hominidae</taxon>
        <taxon>Homo</taxon>
    </lineage>
</organism>
<accession>Q9NWC5</accession>
<accession>Q53YW5</accession>
<gene>
    <name type="primary">TMEM45A</name>
    <name type="synonym">DERP7</name>
    <name type="synonym">DNAPTP4</name>
</gene>
<proteinExistence type="evidence at protein level"/>
<evidence type="ECO:0000255" key="1"/>
<evidence type="ECO:0000305" key="2"/>
<evidence type="ECO:0007829" key="3">
    <source>
        <dbReference type="PDB" id="7OQZ"/>
    </source>
</evidence>
<keyword id="KW-0002">3D-structure</keyword>
<keyword id="KW-0472">Membrane</keyword>
<keyword id="KW-1267">Proteomics identification</keyword>
<keyword id="KW-1185">Reference proteome</keyword>
<keyword id="KW-0812">Transmembrane</keyword>
<keyword id="KW-1133">Transmembrane helix</keyword>
<protein>
    <recommendedName>
        <fullName>Transmembrane protein 45A</fullName>
    </recommendedName>
    <alternativeName>
        <fullName>DNA polymerase-transactivated protein 4</fullName>
    </alternativeName>
    <alternativeName>
        <fullName>Dermal papilla-derived protein 7</fullName>
    </alternativeName>
</protein>
<feature type="chain" id="PRO_0000072569" description="Transmembrane protein 45A">
    <location>
        <begin position="1"/>
        <end position="275"/>
    </location>
</feature>
<feature type="transmembrane region" description="Helical" evidence="1">
    <location>
        <begin position="7"/>
        <end position="27"/>
    </location>
</feature>
<feature type="transmembrane region" description="Helical" evidence="1">
    <location>
        <begin position="51"/>
        <end position="71"/>
    </location>
</feature>
<feature type="transmembrane region" description="Helical" evidence="1">
    <location>
        <begin position="100"/>
        <end position="120"/>
    </location>
</feature>
<feature type="transmembrane region" description="Helical" evidence="1">
    <location>
        <begin position="150"/>
        <end position="170"/>
    </location>
</feature>
<feature type="transmembrane region" description="Helical" evidence="1">
    <location>
        <begin position="218"/>
        <end position="238"/>
    </location>
</feature>
<feature type="helix" evidence="3">
    <location>
        <begin position="4"/>
        <end position="33"/>
    </location>
</feature>
<feature type="strand" evidence="3">
    <location>
        <begin position="34"/>
        <end position="40"/>
    </location>
</feature>
<feature type="helix" evidence="3">
    <location>
        <begin position="43"/>
        <end position="68"/>
    </location>
</feature>
<feature type="helix" evidence="3">
    <location>
        <begin position="91"/>
        <end position="114"/>
    </location>
</feature>
<feature type="helix" evidence="3">
    <location>
        <begin position="121"/>
        <end position="140"/>
    </location>
</feature>
<feature type="helix" evidence="3">
    <location>
        <begin position="147"/>
        <end position="172"/>
    </location>
</feature>
<feature type="helix" evidence="3">
    <location>
        <begin position="177"/>
        <end position="201"/>
    </location>
</feature>
<feature type="helix" evidence="3">
    <location>
        <begin position="215"/>
        <end position="250"/>
    </location>
</feature>
<comment type="interaction">
    <interactant intactId="EBI-10823938">
        <id>Q9NWC5</id>
    </interactant>
    <interactant intactId="EBI-1171525">
        <id>P02652</id>
        <label>APOA2</label>
    </interactant>
    <organismsDiffer>false</organismsDiffer>
    <experiments>3</experiments>
</comment>
<comment type="interaction">
    <interactant intactId="EBI-10823938">
        <id>Q9NWC5</id>
    </interactant>
    <interactant intactId="EBI-12003442">
        <id>Q8WVX3-2</id>
        <label>C4orf3</label>
    </interactant>
    <organismsDiffer>false</organismsDiffer>
    <experiments>3</experiments>
</comment>
<comment type="interaction">
    <interactant intactId="EBI-10823938">
        <id>Q9NWC5</id>
    </interactant>
    <interactant intactId="EBI-10976398">
        <id>Q7Z2K6</id>
        <label>ERMP1</label>
    </interactant>
    <organismsDiffer>false</organismsDiffer>
    <experiments>3</experiments>
</comment>
<comment type="interaction">
    <interactant intactId="EBI-10823938">
        <id>Q9NWC5</id>
    </interactant>
    <interactant intactId="EBI-17458373">
        <id>P48165</id>
        <label>GJA8</label>
    </interactant>
    <organismsDiffer>false</organismsDiffer>
    <experiments>3</experiments>
</comment>
<comment type="interaction">
    <interactant intactId="EBI-10823938">
        <id>Q9NWC5</id>
    </interactant>
    <interactant intactId="EBI-720480">
        <id>P24593</id>
        <label>IGFBP5</label>
    </interactant>
    <organismsDiffer>false</organismsDiffer>
    <experiments>3</experiments>
</comment>
<comment type="interaction">
    <interactant intactId="EBI-10823938">
        <id>Q9NWC5</id>
    </interactant>
    <interactant intactId="EBI-692836">
        <id>P26678</id>
        <label>PLN</label>
    </interactant>
    <organismsDiffer>false</organismsDiffer>
    <experiments>3</experiments>
</comment>
<comment type="interaction">
    <interactant intactId="EBI-10823938">
        <id>Q9NWC5</id>
    </interactant>
    <interactant intactId="EBI-17280858">
        <id>Q8WWF3</id>
        <label>SSMEM1</label>
    </interactant>
    <organismsDiffer>false</organismsDiffer>
    <experiments>3</experiments>
</comment>
<comment type="interaction">
    <interactant intactId="EBI-10823938">
        <id>Q9NWC5</id>
    </interactant>
    <interactant intactId="EBI-741829">
        <id>Q96HH6</id>
        <label>TMEM19</label>
    </interactant>
    <organismsDiffer>false</organismsDiffer>
    <experiments>3</experiments>
</comment>
<comment type="interaction">
    <interactant intactId="EBI-10823938">
        <id>Q9NWC5</id>
    </interactant>
    <interactant intactId="EBI-11988865">
        <id>A5PKU2</id>
        <label>TUSC5</label>
    </interactant>
    <organismsDiffer>false</organismsDiffer>
    <experiments>3</experiments>
</comment>
<comment type="interaction">
    <interactant intactId="EBI-10823938">
        <id>Q9NWC5</id>
    </interactant>
    <interactant intactId="EBI-25475914">
        <id>P0DTD8</id>
        <label>7b</label>
    </interactant>
    <organismsDiffer>true</organismsDiffer>
    <experiments>3</experiments>
</comment>
<comment type="subcellular location">
    <subcellularLocation>
        <location evidence="2">Membrane</location>
        <topology evidence="2">Multi-pass membrane protein</topology>
    </subcellularLocation>
</comment>
<comment type="similarity">
    <text evidence="2">Belongs to the TMEM45 family.</text>
</comment>
<name>TM45A_HUMAN</name>
<sequence>MGNFRGHALPGTFFFIIGLWWCTKSILKYICKKQKRTCYLGSKTLFYRLEILEGITIVGMALTGMAGEQFIPGGPHLMLYDYKQGHWNQLLGWHHFTMYFFFGLLGVADILCFTISSLPVSLTKLMLSNALFVEAFIFYNHTHGREMLDIFVHQLLVLVVFLTGLVAFLEFLVRNNVLLELLRSSLILLQGSWFFQIGFVLYPPSGGPAWDLMDHENILFLTICFCWHYAVTIVIVGMNYAFITWLVKSRLKRLCSSEVGLLKNAEREQESEEEM</sequence>
<reference key="1">
    <citation type="submission" date="1998-05" db="EMBL/GenBank/DDBJ databases">
        <title>Molecular cloning of a dermal papilla derived gene.</title>
        <authorList>
            <person name="Ikeda A."/>
            <person name="Ukai Y."/>
            <person name="Yamashita M."/>
            <person name="Yoshimoto M."/>
        </authorList>
    </citation>
    <scope>NUCLEOTIDE SEQUENCE [MRNA]</scope>
    <source>
        <tissue>Hair follicle dermal papilla</tissue>
    </source>
</reference>
<reference key="2">
    <citation type="submission" date="2003-10" db="EMBL/GenBank/DDBJ databases">
        <title>Screening and cloning of the target genes transactivated by hepatitis B virus DNA polymerase using suppression subtractive hybridization (SSH) technique.</title>
        <authorList>
            <person name="Wang C."/>
            <person name="Cheng J."/>
            <person name="Lang Z."/>
            <person name="Ji D."/>
            <person name="Yang Y."/>
            <person name="Zhang L."/>
            <person name="Wu Y."/>
        </authorList>
    </citation>
    <scope>NUCLEOTIDE SEQUENCE [MRNA]</scope>
</reference>
<reference key="3">
    <citation type="journal article" date="2004" name="Nat. Genet.">
        <title>Complete sequencing and characterization of 21,243 full-length human cDNAs.</title>
        <authorList>
            <person name="Ota T."/>
            <person name="Suzuki Y."/>
            <person name="Nishikawa T."/>
            <person name="Otsuki T."/>
            <person name="Sugiyama T."/>
            <person name="Irie R."/>
            <person name="Wakamatsu A."/>
            <person name="Hayashi K."/>
            <person name="Sato H."/>
            <person name="Nagai K."/>
            <person name="Kimura K."/>
            <person name="Makita H."/>
            <person name="Sekine M."/>
            <person name="Obayashi M."/>
            <person name="Nishi T."/>
            <person name="Shibahara T."/>
            <person name="Tanaka T."/>
            <person name="Ishii S."/>
            <person name="Yamamoto J."/>
            <person name="Saito K."/>
            <person name="Kawai Y."/>
            <person name="Isono Y."/>
            <person name="Nakamura Y."/>
            <person name="Nagahari K."/>
            <person name="Murakami K."/>
            <person name="Yasuda T."/>
            <person name="Iwayanagi T."/>
            <person name="Wagatsuma M."/>
            <person name="Shiratori A."/>
            <person name="Sudo H."/>
            <person name="Hosoiri T."/>
            <person name="Kaku Y."/>
            <person name="Kodaira H."/>
            <person name="Kondo H."/>
            <person name="Sugawara M."/>
            <person name="Takahashi M."/>
            <person name="Kanda K."/>
            <person name="Yokoi T."/>
            <person name="Furuya T."/>
            <person name="Kikkawa E."/>
            <person name="Omura Y."/>
            <person name="Abe K."/>
            <person name="Kamihara K."/>
            <person name="Katsuta N."/>
            <person name="Sato K."/>
            <person name="Tanikawa M."/>
            <person name="Yamazaki M."/>
            <person name="Ninomiya K."/>
            <person name="Ishibashi T."/>
            <person name="Yamashita H."/>
            <person name="Murakawa K."/>
            <person name="Fujimori K."/>
            <person name="Tanai H."/>
            <person name="Kimata M."/>
            <person name="Watanabe M."/>
            <person name="Hiraoka S."/>
            <person name="Chiba Y."/>
            <person name="Ishida S."/>
            <person name="Ono Y."/>
            <person name="Takiguchi S."/>
            <person name="Watanabe S."/>
            <person name="Yosida M."/>
            <person name="Hotuta T."/>
            <person name="Kusano J."/>
            <person name="Kanehori K."/>
            <person name="Takahashi-Fujii A."/>
            <person name="Hara H."/>
            <person name="Tanase T.-O."/>
            <person name="Nomura Y."/>
            <person name="Togiya S."/>
            <person name="Komai F."/>
            <person name="Hara R."/>
            <person name="Takeuchi K."/>
            <person name="Arita M."/>
            <person name="Imose N."/>
            <person name="Musashino K."/>
            <person name="Yuuki H."/>
            <person name="Oshima A."/>
            <person name="Sasaki N."/>
            <person name="Aotsuka S."/>
            <person name="Yoshikawa Y."/>
            <person name="Matsunawa H."/>
            <person name="Ichihara T."/>
            <person name="Shiohata N."/>
            <person name="Sano S."/>
            <person name="Moriya S."/>
            <person name="Momiyama H."/>
            <person name="Satoh N."/>
            <person name="Takami S."/>
            <person name="Terashima Y."/>
            <person name="Suzuki O."/>
            <person name="Nakagawa S."/>
            <person name="Senoh A."/>
            <person name="Mizoguchi H."/>
            <person name="Goto Y."/>
            <person name="Shimizu F."/>
            <person name="Wakebe H."/>
            <person name="Hishigaki H."/>
            <person name="Watanabe T."/>
            <person name="Sugiyama A."/>
            <person name="Takemoto M."/>
            <person name="Kawakami B."/>
            <person name="Yamazaki M."/>
            <person name="Watanabe K."/>
            <person name="Kumagai A."/>
            <person name="Itakura S."/>
            <person name="Fukuzumi Y."/>
            <person name="Fujimori Y."/>
            <person name="Komiyama M."/>
            <person name="Tashiro H."/>
            <person name="Tanigami A."/>
            <person name="Fujiwara T."/>
            <person name="Ono T."/>
            <person name="Yamada K."/>
            <person name="Fujii Y."/>
            <person name="Ozaki K."/>
            <person name="Hirao M."/>
            <person name="Ohmori Y."/>
            <person name="Kawabata A."/>
            <person name="Hikiji T."/>
            <person name="Kobatake N."/>
            <person name="Inagaki H."/>
            <person name="Ikema Y."/>
            <person name="Okamoto S."/>
            <person name="Okitani R."/>
            <person name="Kawakami T."/>
            <person name="Noguchi S."/>
            <person name="Itoh T."/>
            <person name="Shigeta K."/>
            <person name="Senba T."/>
            <person name="Matsumura K."/>
            <person name="Nakajima Y."/>
            <person name="Mizuno T."/>
            <person name="Morinaga M."/>
            <person name="Sasaki M."/>
            <person name="Togashi T."/>
            <person name="Oyama M."/>
            <person name="Hata H."/>
            <person name="Watanabe M."/>
            <person name="Komatsu T."/>
            <person name="Mizushima-Sugano J."/>
            <person name="Satoh T."/>
            <person name="Shirai Y."/>
            <person name="Takahashi Y."/>
            <person name="Nakagawa K."/>
            <person name="Okumura K."/>
            <person name="Nagase T."/>
            <person name="Nomura N."/>
            <person name="Kikuchi H."/>
            <person name="Masuho Y."/>
            <person name="Yamashita R."/>
            <person name="Nakai K."/>
            <person name="Yada T."/>
            <person name="Nakamura Y."/>
            <person name="Ohara O."/>
            <person name="Isogai T."/>
            <person name="Sugano S."/>
        </authorList>
    </citation>
    <scope>NUCLEOTIDE SEQUENCE [LARGE SCALE MRNA]</scope>
    <source>
        <tissue>Embryo</tissue>
    </source>
</reference>
<reference key="4">
    <citation type="journal article" date="2004" name="Genome Res.">
        <title>The status, quality, and expansion of the NIH full-length cDNA project: the Mammalian Gene Collection (MGC).</title>
        <authorList>
            <consortium name="The MGC Project Team"/>
        </authorList>
    </citation>
    <scope>NUCLEOTIDE SEQUENCE [LARGE SCALE MRNA]</scope>
    <source>
        <tissue>Skin</tissue>
    </source>
</reference>
<dbReference type="EMBL" id="AB013911">
    <property type="protein sequence ID" value="BAB87801.1"/>
    <property type="molecule type" value="mRNA"/>
</dbReference>
<dbReference type="EMBL" id="AY450392">
    <property type="protein sequence ID" value="AAR21085.1"/>
    <property type="molecule type" value="mRNA"/>
</dbReference>
<dbReference type="EMBL" id="AK000996">
    <property type="protein sequence ID" value="BAA91458.1"/>
    <property type="molecule type" value="mRNA"/>
</dbReference>
<dbReference type="EMBL" id="BC040355">
    <property type="protein sequence ID" value="AAH40355.1"/>
    <property type="molecule type" value="mRNA"/>
</dbReference>
<dbReference type="CCDS" id="CCDS2937.1"/>
<dbReference type="RefSeq" id="NP_060474.1">
    <property type="nucleotide sequence ID" value="NM_018004.3"/>
</dbReference>
<dbReference type="PDB" id="7OQZ">
    <property type="method" value="EM"/>
    <property type="resolution" value="3.27 A"/>
    <property type="chains" value="A/B/C/D=3-275"/>
</dbReference>
<dbReference type="PDBsum" id="7OQZ"/>
<dbReference type="EMDB" id="EMD-13035"/>
<dbReference type="SMR" id="Q9NWC5"/>
<dbReference type="BioGRID" id="120393">
    <property type="interactions" value="19"/>
</dbReference>
<dbReference type="FunCoup" id="Q9NWC5">
    <property type="interactions" value="89"/>
</dbReference>
<dbReference type="IntAct" id="Q9NWC5">
    <property type="interactions" value="19"/>
</dbReference>
<dbReference type="MINT" id="Q9NWC5"/>
<dbReference type="STRING" id="9606.ENSP00000385089"/>
<dbReference type="iPTMnet" id="Q9NWC5"/>
<dbReference type="PhosphoSitePlus" id="Q9NWC5"/>
<dbReference type="SwissPalm" id="Q9NWC5"/>
<dbReference type="BioMuta" id="TMEM45A"/>
<dbReference type="DMDM" id="28380044"/>
<dbReference type="jPOST" id="Q9NWC5"/>
<dbReference type="MassIVE" id="Q9NWC5"/>
<dbReference type="PaxDb" id="9606-ENSP00000319009"/>
<dbReference type="PeptideAtlas" id="Q9NWC5"/>
<dbReference type="ProteomicsDB" id="82926"/>
<dbReference type="Antibodypedia" id="15847">
    <property type="antibodies" value="36 antibodies from 12 providers"/>
</dbReference>
<dbReference type="DNASU" id="55076"/>
<dbReference type="Ensembl" id="ENST00000323523.8">
    <property type="protein sequence ID" value="ENSP00000319009.4"/>
    <property type="gene ID" value="ENSG00000181458.10"/>
</dbReference>
<dbReference type="GeneID" id="55076"/>
<dbReference type="KEGG" id="hsa:55076"/>
<dbReference type="MANE-Select" id="ENST00000323523.8">
    <property type="protein sequence ID" value="ENSP00000319009.4"/>
    <property type="RefSeq nucleotide sequence ID" value="NM_018004.3"/>
    <property type="RefSeq protein sequence ID" value="NP_060474.1"/>
</dbReference>
<dbReference type="UCSC" id="uc003dtz.2">
    <property type="organism name" value="human"/>
</dbReference>
<dbReference type="AGR" id="HGNC:25480"/>
<dbReference type="CTD" id="55076"/>
<dbReference type="DisGeNET" id="55076"/>
<dbReference type="GeneCards" id="TMEM45A"/>
<dbReference type="HGNC" id="HGNC:25480">
    <property type="gene designation" value="TMEM45A"/>
</dbReference>
<dbReference type="HPA" id="ENSG00000181458">
    <property type="expression patterns" value="Tissue enriched (skin)"/>
</dbReference>
<dbReference type="neXtProt" id="NX_Q9NWC5"/>
<dbReference type="OpenTargets" id="ENSG00000181458"/>
<dbReference type="PharmGKB" id="PA134868262"/>
<dbReference type="VEuPathDB" id="HostDB:ENSG00000181458"/>
<dbReference type="eggNOG" id="ENOG502QU0J">
    <property type="taxonomic scope" value="Eukaryota"/>
</dbReference>
<dbReference type="GeneTree" id="ENSGT00940000155530"/>
<dbReference type="HOGENOM" id="CLU_059568_0_1_1"/>
<dbReference type="InParanoid" id="Q9NWC5"/>
<dbReference type="OrthoDB" id="551896at2759"/>
<dbReference type="PAN-GO" id="Q9NWC5">
    <property type="GO annotations" value="0 GO annotations based on evolutionary models"/>
</dbReference>
<dbReference type="PhylomeDB" id="Q9NWC5"/>
<dbReference type="TreeFam" id="TF328673"/>
<dbReference type="PathwayCommons" id="Q9NWC5"/>
<dbReference type="SignaLink" id="Q9NWC5"/>
<dbReference type="BioGRID-ORCS" id="55076">
    <property type="hits" value="10 hits in 1124 CRISPR screens"/>
</dbReference>
<dbReference type="ChiTaRS" id="TMEM45A">
    <property type="organism name" value="human"/>
</dbReference>
<dbReference type="GenomeRNAi" id="55076"/>
<dbReference type="Pharos" id="Q9NWC5">
    <property type="development level" value="Tbio"/>
</dbReference>
<dbReference type="PRO" id="PR:Q9NWC5"/>
<dbReference type="Proteomes" id="UP000005640">
    <property type="component" value="Chromosome 3"/>
</dbReference>
<dbReference type="RNAct" id="Q9NWC5">
    <property type="molecule type" value="protein"/>
</dbReference>
<dbReference type="Bgee" id="ENSG00000181458">
    <property type="expression patterns" value="Expressed in penis and 169 other cell types or tissues"/>
</dbReference>
<dbReference type="ExpressionAtlas" id="Q9NWC5">
    <property type="expression patterns" value="baseline and differential"/>
</dbReference>
<dbReference type="GO" id="GO:0016020">
    <property type="term" value="C:membrane"/>
    <property type="evidence" value="ECO:0007669"/>
    <property type="project" value="UniProtKB-SubCell"/>
</dbReference>
<dbReference type="InterPro" id="IPR006904">
    <property type="entry name" value="DUF716"/>
</dbReference>
<dbReference type="InterPro" id="IPR042127">
    <property type="entry name" value="TMEM45"/>
</dbReference>
<dbReference type="PANTHER" id="PTHR16007">
    <property type="entry name" value="EPIDIDYMAL MEMBRANE PROTEIN E9-RELATED"/>
    <property type="match status" value="1"/>
</dbReference>
<dbReference type="PANTHER" id="PTHR16007:SF21">
    <property type="entry name" value="TRANSMEMBRANE PROTEIN 45A"/>
    <property type="match status" value="1"/>
</dbReference>
<dbReference type="Pfam" id="PF04819">
    <property type="entry name" value="DUF716"/>
    <property type="match status" value="1"/>
</dbReference>